<dbReference type="EMBL" id="CP000613">
    <property type="protein sequence ID" value="ACI99692.1"/>
    <property type="molecule type" value="Genomic_DNA"/>
</dbReference>
<dbReference type="RefSeq" id="WP_012567477.1">
    <property type="nucleotide sequence ID" value="NC_011420.2"/>
</dbReference>
<dbReference type="SMR" id="B6IPJ0"/>
<dbReference type="STRING" id="414684.RC1_2305"/>
<dbReference type="KEGG" id="rce:RC1_2305"/>
<dbReference type="eggNOG" id="COG0718">
    <property type="taxonomic scope" value="Bacteria"/>
</dbReference>
<dbReference type="HOGENOM" id="CLU_140930_0_1_5"/>
<dbReference type="OrthoDB" id="9803080at2"/>
<dbReference type="Proteomes" id="UP000001591">
    <property type="component" value="Chromosome"/>
</dbReference>
<dbReference type="GO" id="GO:0043590">
    <property type="term" value="C:bacterial nucleoid"/>
    <property type="evidence" value="ECO:0007669"/>
    <property type="project" value="UniProtKB-UniRule"/>
</dbReference>
<dbReference type="GO" id="GO:0005829">
    <property type="term" value="C:cytosol"/>
    <property type="evidence" value="ECO:0007669"/>
    <property type="project" value="TreeGrafter"/>
</dbReference>
<dbReference type="GO" id="GO:0003677">
    <property type="term" value="F:DNA binding"/>
    <property type="evidence" value="ECO:0007669"/>
    <property type="project" value="UniProtKB-UniRule"/>
</dbReference>
<dbReference type="Gene3D" id="3.30.1310.10">
    <property type="entry name" value="Nucleoid-associated protein YbaB-like domain"/>
    <property type="match status" value="1"/>
</dbReference>
<dbReference type="HAMAP" id="MF_00274">
    <property type="entry name" value="DNA_YbaB_EbfC"/>
    <property type="match status" value="1"/>
</dbReference>
<dbReference type="InterPro" id="IPR036894">
    <property type="entry name" value="YbaB-like_sf"/>
</dbReference>
<dbReference type="InterPro" id="IPR004401">
    <property type="entry name" value="YbaB/EbfC"/>
</dbReference>
<dbReference type="NCBIfam" id="TIGR00103">
    <property type="entry name" value="DNA_YbaB_EbfC"/>
    <property type="match status" value="1"/>
</dbReference>
<dbReference type="PANTHER" id="PTHR33449">
    <property type="entry name" value="NUCLEOID-ASSOCIATED PROTEIN YBAB"/>
    <property type="match status" value="1"/>
</dbReference>
<dbReference type="PANTHER" id="PTHR33449:SF1">
    <property type="entry name" value="NUCLEOID-ASSOCIATED PROTEIN YBAB"/>
    <property type="match status" value="1"/>
</dbReference>
<dbReference type="Pfam" id="PF02575">
    <property type="entry name" value="YbaB_DNA_bd"/>
    <property type="match status" value="1"/>
</dbReference>
<dbReference type="PIRSF" id="PIRSF004555">
    <property type="entry name" value="UCP004555"/>
    <property type="match status" value="1"/>
</dbReference>
<dbReference type="SUPFAM" id="SSF82607">
    <property type="entry name" value="YbaB-like"/>
    <property type="match status" value="1"/>
</dbReference>
<feature type="chain" id="PRO_1000114637" description="Nucleoid-associated protein RC1_2305">
    <location>
        <begin position="1"/>
        <end position="107"/>
    </location>
</feature>
<keyword id="KW-0963">Cytoplasm</keyword>
<keyword id="KW-0238">DNA-binding</keyword>
<keyword id="KW-1185">Reference proteome</keyword>
<comment type="function">
    <text evidence="1">Binds to DNA and alters its conformation. May be involved in regulation of gene expression, nucleoid organization and DNA protection.</text>
</comment>
<comment type="subunit">
    <text evidence="1">Homodimer.</text>
</comment>
<comment type="subcellular location">
    <subcellularLocation>
        <location evidence="1">Cytoplasm</location>
        <location evidence="1">Nucleoid</location>
    </subcellularLocation>
</comment>
<comment type="similarity">
    <text evidence="1">Belongs to the YbaB/EbfC family.</text>
</comment>
<proteinExistence type="inferred from homology"/>
<organism>
    <name type="scientific">Rhodospirillum centenum (strain ATCC 51521 / SW)</name>
    <dbReference type="NCBI Taxonomy" id="414684"/>
    <lineage>
        <taxon>Bacteria</taxon>
        <taxon>Pseudomonadati</taxon>
        <taxon>Pseudomonadota</taxon>
        <taxon>Alphaproteobacteria</taxon>
        <taxon>Rhodospirillales</taxon>
        <taxon>Rhodospirillaceae</taxon>
        <taxon>Rhodospirillum</taxon>
    </lineage>
</organism>
<name>Y2305_RHOCS</name>
<evidence type="ECO:0000255" key="1">
    <source>
        <dbReference type="HAMAP-Rule" id="MF_00274"/>
    </source>
</evidence>
<accession>B6IPJ0</accession>
<sequence>MKNLGNMMKQAQQMQARMQEMQSKLAEVEVNGVSAGGMVSILLNGKGELKQIKLDKSVVDPEDVEVLEDLIVAAFNDAKNKVEAHMAEETAKLMGGLKLPPGFKLPF</sequence>
<reference key="1">
    <citation type="submission" date="2007-03" db="EMBL/GenBank/DDBJ databases">
        <title>Genome sequence of Rhodospirillum centenum.</title>
        <authorList>
            <person name="Touchman J.W."/>
            <person name="Bauer C."/>
            <person name="Blankenship R.E."/>
        </authorList>
    </citation>
    <scope>NUCLEOTIDE SEQUENCE [LARGE SCALE GENOMIC DNA]</scope>
    <source>
        <strain>ATCC 51521 / SW</strain>
    </source>
</reference>
<gene>
    <name type="ordered locus">RC1_2305</name>
</gene>
<protein>
    <recommendedName>
        <fullName evidence="1">Nucleoid-associated protein RC1_2305</fullName>
    </recommendedName>
</protein>